<organism>
    <name type="scientific">Streptococcus mutans serotype c (strain ATCC 700610 / UA159)</name>
    <dbReference type="NCBI Taxonomy" id="210007"/>
    <lineage>
        <taxon>Bacteria</taxon>
        <taxon>Bacillati</taxon>
        <taxon>Bacillota</taxon>
        <taxon>Bacilli</taxon>
        <taxon>Lactobacillales</taxon>
        <taxon>Streptococcaceae</taxon>
        <taxon>Streptococcus</taxon>
    </lineage>
</organism>
<keyword id="KW-0342">GTP-binding</keyword>
<keyword id="KW-0547">Nucleotide-binding</keyword>
<keyword id="KW-1185">Reference proteome</keyword>
<keyword id="KW-0677">Repeat</keyword>
<keyword id="KW-0690">Ribosome biogenesis</keyword>
<feature type="chain" id="PRO_0000179054" description="GTPase Der">
    <location>
        <begin position="1"/>
        <end position="436"/>
    </location>
</feature>
<feature type="domain" description="EngA-type G 1">
    <location>
        <begin position="4"/>
        <end position="167"/>
    </location>
</feature>
<feature type="domain" description="EngA-type G 2">
    <location>
        <begin position="175"/>
        <end position="351"/>
    </location>
</feature>
<feature type="domain" description="KH-like" evidence="1">
    <location>
        <begin position="352"/>
        <end position="436"/>
    </location>
</feature>
<feature type="binding site" evidence="1">
    <location>
        <begin position="10"/>
        <end position="17"/>
    </location>
    <ligand>
        <name>GTP</name>
        <dbReference type="ChEBI" id="CHEBI:37565"/>
        <label>1</label>
    </ligand>
</feature>
<feature type="binding site" evidence="1">
    <location>
        <begin position="57"/>
        <end position="61"/>
    </location>
    <ligand>
        <name>GTP</name>
        <dbReference type="ChEBI" id="CHEBI:37565"/>
        <label>1</label>
    </ligand>
</feature>
<feature type="binding site" evidence="1">
    <location>
        <begin position="119"/>
        <end position="122"/>
    </location>
    <ligand>
        <name>GTP</name>
        <dbReference type="ChEBI" id="CHEBI:37565"/>
        <label>1</label>
    </ligand>
</feature>
<feature type="binding site" evidence="1">
    <location>
        <begin position="181"/>
        <end position="188"/>
    </location>
    <ligand>
        <name>GTP</name>
        <dbReference type="ChEBI" id="CHEBI:37565"/>
        <label>2</label>
    </ligand>
</feature>
<feature type="binding site" evidence="1">
    <location>
        <begin position="229"/>
        <end position="233"/>
    </location>
    <ligand>
        <name>GTP</name>
        <dbReference type="ChEBI" id="CHEBI:37565"/>
        <label>2</label>
    </ligand>
</feature>
<feature type="binding site" evidence="1">
    <location>
        <begin position="294"/>
        <end position="297"/>
    </location>
    <ligand>
        <name>GTP</name>
        <dbReference type="ChEBI" id="CHEBI:37565"/>
        <label>2</label>
    </ligand>
</feature>
<feature type="sequence conflict" description="In Ref. 1; BAA88823." evidence="2" ref="1">
    <original>T</original>
    <variation>A</variation>
    <location>
        <position position="165"/>
    </location>
</feature>
<feature type="sequence conflict" description="In Ref. 1; BAA88823." evidence="2" ref="1">
    <original>A</original>
    <variation>T</variation>
    <location>
        <position position="311"/>
    </location>
</feature>
<feature type="sequence conflict" description="In Ref. 1; BAA88823." evidence="2" ref="1">
    <original>A</original>
    <variation>S</variation>
    <location>
        <position position="357"/>
    </location>
</feature>
<comment type="function">
    <text evidence="1">GTPase that plays an essential role in the late steps of ribosome biogenesis.</text>
</comment>
<comment type="subunit">
    <text evidence="1">Associates with the 50S ribosomal subunit.</text>
</comment>
<comment type="similarity">
    <text evidence="1">Belongs to the TRAFAC class TrmE-Era-EngA-EngB-Septin-like GTPase superfamily. EngA (Der) GTPase family.</text>
</comment>
<comment type="caution">
    <text evidence="3">Was originally thought to be a D-3-phosphoglycerate dehydrogenase.</text>
</comment>
<sequence>MALPTVAIVGRPNVGKSALFNRIAGERISIVEDVEGVTRDRIYTKAEWLNRQFSIIDTGGIDDVDAPFMEQIKHQADIAMTEADVIVFVVSAKEGITDADEYVAKILYRTHKPVILAVNKVDNPEMRSAIYDFYALGLGDPYPVSSAHGIGTGDVLDAIVDNLPTEAQEESSDIIKFSLIGRPNVGKSSLINAILGEDRVIASPVAGTTRDAIDTTFTDEEGQEFTMIDTAGMRKSGKVYENTEKYSVMRAMRAIDRSDIVLMVLNAEEGIREYDKRIAGFAHEAGKGIVVVVNKWDAIKKDNRTVAQWEADIRDNFQYIPYAPIVFVSAVTKQRLHKLPDVIKQVSQSQNTRIPSAVLNDVVMDAVAINPTPTDKGKRLKIFYATQVSVKPPTFVIFVNEEELMHFSYLRFLENQIRQAFVFEGTPIRLIARKRK</sequence>
<reference key="1">
    <citation type="journal article" date="2000" name="Oral Microbiol. Immunol.">
        <title>Molecular cloning, sequence and characterization of a novel streptococcal phosphoglycerate dehydrogenase gene.</title>
        <authorList>
            <person name="Kawabata S."/>
            <person name="Terao Y."/>
            <person name="Hamada S."/>
        </authorList>
    </citation>
    <scope>NUCLEOTIDE SEQUENCE [GENOMIC DNA]</scope>
    <source>
        <strain>MT8148 / Serotype c</strain>
    </source>
</reference>
<reference key="2">
    <citation type="journal article" date="2002" name="Proc. Natl. Acad. Sci. U.S.A.">
        <title>Genome sequence of Streptococcus mutans UA159, a cariogenic dental pathogen.</title>
        <authorList>
            <person name="Ajdic D.J."/>
            <person name="McShan W.M."/>
            <person name="McLaughlin R.E."/>
            <person name="Savic G."/>
            <person name="Chang J."/>
            <person name="Carson M.B."/>
            <person name="Primeaux C."/>
            <person name="Tian R."/>
            <person name="Kenton S."/>
            <person name="Jia H.G."/>
            <person name="Lin S.P."/>
            <person name="Qian Y."/>
            <person name="Li S."/>
            <person name="Zhu H."/>
            <person name="Najar F.Z."/>
            <person name="Lai H."/>
            <person name="White J."/>
            <person name="Roe B.A."/>
            <person name="Ferretti J.J."/>
        </authorList>
    </citation>
    <scope>NUCLEOTIDE SEQUENCE [LARGE SCALE GENOMIC DNA]</scope>
    <source>
        <strain>ATCC 700610 / UA159</strain>
    </source>
</reference>
<dbReference type="EMBL" id="AB016077">
    <property type="protein sequence ID" value="BAA88823.1"/>
    <property type="molecule type" value="Genomic_DNA"/>
</dbReference>
<dbReference type="EMBL" id="AE014133">
    <property type="protein sequence ID" value="AAN59531.1"/>
    <property type="molecule type" value="Genomic_DNA"/>
</dbReference>
<dbReference type="RefSeq" id="NP_722225.1">
    <property type="nucleotide sequence ID" value="NC_004350.2"/>
</dbReference>
<dbReference type="RefSeq" id="WP_002262117.1">
    <property type="nucleotide sequence ID" value="NC_004350.2"/>
</dbReference>
<dbReference type="SMR" id="Q8DS90"/>
<dbReference type="STRING" id="210007.SMU_1920"/>
<dbReference type="KEGG" id="smu:SMU_1920"/>
<dbReference type="PATRIC" id="fig|210007.7.peg.1706"/>
<dbReference type="eggNOG" id="COG1160">
    <property type="taxonomic scope" value="Bacteria"/>
</dbReference>
<dbReference type="HOGENOM" id="CLU_016077_6_2_9"/>
<dbReference type="OrthoDB" id="9805918at2"/>
<dbReference type="PhylomeDB" id="Q8DS90"/>
<dbReference type="Proteomes" id="UP000002512">
    <property type="component" value="Chromosome"/>
</dbReference>
<dbReference type="GO" id="GO:0005525">
    <property type="term" value="F:GTP binding"/>
    <property type="evidence" value="ECO:0007669"/>
    <property type="project" value="UniProtKB-UniRule"/>
</dbReference>
<dbReference type="GO" id="GO:0043022">
    <property type="term" value="F:ribosome binding"/>
    <property type="evidence" value="ECO:0007669"/>
    <property type="project" value="TreeGrafter"/>
</dbReference>
<dbReference type="GO" id="GO:0042254">
    <property type="term" value="P:ribosome biogenesis"/>
    <property type="evidence" value="ECO:0007669"/>
    <property type="project" value="UniProtKB-KW"/>
</dbReference>
<dbReference type="CDD" id="cd01894">
    <property type="entry name" value="EngA1"/>
    <property type="match status" value="1"/>
</dbReference>
<dbReference type="CDD" id="cd01895">
    <property type="entry name" value="EngA2"/>
    <property type="match status" value="1"/>
</dbReference>
<dbReference type="FunFam" id="3.30.300.20:FF:000004">
    <property type="entry name" value="GTPase Der"/>
    <property type="match status" value="1"/>
</dbReference>
<dbReference type="FunFam" id="3.40.50.300:FF:000040">
    <property type="entry name" value="GTPase Der"/>
    <property type="match status" value="1"/>
</dbReference>
<dbReference type="FunFam" id="3.40.50.300:FF:000057">
    <property type="entry name" value="GTPase Der"/>
    <property type="match status" value="1"/>
</dbReference>
<dbReference type="Gene3D" id="3.30.300.20">
    <property type="match status" value="1"/>
</dbReference>
<dbReference type="Gene3D" id="3.40.50.300">
    <property type="entry name" value="P-loop containing nucleotide triphosphate hydrolases"/>
    <property type="match status" value="2"/>
</dbReference>
<dbReference type="HAMAP" id="MF_00195">
    <property type="entry name" value="GTPase_Der"/>
    <property type="match status" value="1"/>
</dbReference>
<dbReference type="InterPro" id="IPR031166">
    <property type="entry name" value="G_ENGA"/>
</dbReference>
<dbReference type="InterPro" id="IPR006073">
    <property type="entry name" value="GTP-bd"/>
</dbReference>
<dbReference type="InterPro" id="IPR016484">
    <property type="entry name" value="GTPase_Der"/>
</dbReference>
<dbReference type="InterPro" id="IPR032859">
    <property type="entry name" value="KH_dom-like"/>
</dbReference>
<dbReference type="InterPro" id="IPR015946">
    <property type="entry name" value="KH_dom-like_a/b"/>
</dbReference>
<dbReference type="InterPro" id="IPR027417">
    <property type="entry name" value="P-loop_NTPase"/>
</dbReference>
<dbReference type="InterPro" id="IPR005225">
    <property type="entry name" value="Small_GTP-bd"/>
</dbReference>
<dbReference type="NCBIfam" id="TIGR03594">
    <property type="entry name" value="GTPase_EngA"/>
    <property type="match status" value="1"/>
</dbReference>
<dbReference type="NCBIfam" id="TIGR00231">
    <property type="entry name" value="small_GTP"/>
    <property type="match status" value="2"/>
</dbReference>
<dbReference type="PANTHER" id="PTHR43834">
    <property type="entry name" value="GTPASE DER"/>
    <property type="match status" value="1"/>
</dbReference>
<dbReference type="PANTHER" id="PTHR43834:SF6">
    <property type="entry name" value="GTPASE DER"/>
    <property type="match status" value="1"/>
</dbReference>
<dbReference type="Pfam" id="PF14714">
    <property type="entry name" value="KH_dom-like"/>
    <property type="match status" value="1"/>
</dbReference>
<dbReference type="Pfam" id="PF01926">
    <property type="entry name" value="MMR_HSR1"/>
    <property type="match status" value="2"/>
</dbReference>
<dbReference type="PIRSF" id="PIRSF006485">
    <property type="entry name" value="GTP-binding_EngA"/>
    <property type="match status" value="1"/>
</dbReference>
<dbReference type="SUPFAM" id="SSF52540">
    <property type="entry name" value="P-loop containing nucleoside triphosphate hydrolases"/>
    <property type="match status" value="2"/>
</dbReference>
<dbReference type="PROSITE" id="PS51712">
    <property type="entry name" value="G_ENGA"/>
    <property type="match status" value="2"/>
</dbReference>
<accession>Q8DS90</accession>
<accession>Q9RHV5</accession>
<name>DER_STRMU</name>
<evidence type="ECO:0000255" key="1">
    <source>
        <dbReference type="HAMAP-Rule" id="MF_00195"/>
    </source>
</evidence>
<evidence type="ECO:0000305" key="2"/>
<evidence type="ECO:0000305" key="3">
    <source>
    </source>
</evidence>
<gene>
    <name evidence="1" type="primary">der</name>
    <name type="synonym">engA</name>
    <name type="synonym">serA</name>
    <name type="ordered locus">SMU_1920</name>
</gene>
<protein>
    <recommendedName>
        <fullName evidence="1">GTPase Der</fullName>
    </recommendedName>
    <alternativeName>
        <fullName evidence="1">GTP-binding protein EngA</fullName>
    </alternativeName>
</protein>
<proteinExistence type="inferred from homology"/>